<protein>
    <recommendedName>
        <fullName evidence="1">Nucleotide-binding protein Bcen2424_2795</fullName>
    </recommendedName>
</protein>
<keyword id="KW-0067">ATP-binding</keyword>
<keyword id="KW-0342">GTP-binding</keyword>
<keyword id="KW-0547">Nucleotide-binding</keyword>
<reference key="1">
    <citation type="submission" date="2006-08" db="EMBL/GenBank/DDBJ databases">
        <title>Complete sequence of chromosome 1 of Burkholderia cenocepacia HI2424.</title>
        <authorList>
            <person name="Copeland A."/>
            <person name="Lucas S."/>
            <person name="Lapidus A."/>
            <person name="Barry K."/>
            <person name="Detter J.C."/>
            <person name="Glavina del Rio T."/>
            <person name="Hammon N."/>
            <person name="Israni S."/>
            <person name="Pitluck S."/>
            <person name="Chain P."/>
            <person name="Malfatti S."/>
            <person name="Shin M."/>
            <person name="Vergez L."/>
            <person name="Schmutz J."/>
            <person name="Larimer F."/>
            <person name="Land M."/>
            <person name="Hauser L."/>
            <person name="Kyrpides N."/>
            <person name="Kim E."/>
            <person name="LiPuma J.J."/>
            <person name="Gonzalez C.F."/>
            <person name="Konstantinidis K."/>
            <person name="Tiedje J.M."/>
            <person name="Richardson P."/>
        </authorList>
    </citation>
    <scope>NUCLEOTIDE SEQUENCE [LARGE SCALE GENOMIC DNA]</scope>
    <source>
        <strain>HI2424</strain>
    </source>
</reference>
<gene>
    <name type="ordered locus">Bcen2424_2795</name>
</gene>
<feature type="chain" id="PRO_1000056808" description="Nucleotide-binding protein Bcen2424_2795">
    <location>
        <begin position="1"/>
        <end position="302"/>
    </location>
</feature>
<feature type="binding site" evidence="1">
    <location>
        <begin position="8"/>
        <end position="15"/>
    </location>
    <ligand>
        <name>ATP</name>
        <dbReference type="ChEBI" id="CHEBI:30616"/>
    </ligand>
</feature>
<feature type="binding site" evidence="1">
    <location>
        <begin position="57"/>
        <end position="60"/>
    </location>
    <ligand>
        <name>GTP</name>
        <dbReference type="ChEBI" id="CHEBI:37565"/>
    </ligand>
</feature>
<organism>
    <name type="scientific">Burkholderia cenocepacia (strain HI2424)</name>
    <dbReference type="NCBI Taxonomy" id="331272"/>
    <lineage>
        <taxon>Bacteria</taxon>
        <taxon>Pseudomonadati</taxon>
        <taxon>Pseudomonadota</taxon>
        <taxon>Betaproteobacteria</taxon>
        <taxon>Burkholderiales</taxon>
        <taxon>Burkholderiaceae</taxon>
        <taxon>Burkholderia</taxon>
        <taxon>Burkholderia cepacia complex</taxon>
    </lineage>
</organism>
<comment type="function">
    <text evidence="1">Displays ATPase and GTPase activities.</text>
</comment>
<comment type="similarity">
    <text evidence="1">Belongs to the RapZ-like family.</text>
</comment>
<sequence>MRIVLITGISGSGKSVALNALEDAGYYCVDNLPPHVLPELARYLAQDGQRRLAVAIDARSSASLDEMPGLIRELSREHDVRVLFLNASTQALIQRFSETRRRHPLSGSRSHDADVGLLSSLEEAIERERELVAPLAEFGHQIDTSTLRANALRTWVKRFIEQKNNDLMVMFESFGFKRGVPLDADLMFDVRALPNPYYDHQLRPLTGLDQPVIAFLDALPIVHQMIDDIHAFLMKWLPHFRDDNRSYLTVAIGCTGGQHRSVFIAETLAARLARDANVIVRHRDAPVDVDASSRLVSEVDRP</sequence>
<evidence type="ECO:0000255" key="1">
    <source>
        <dbReference type="HAMAP-Rule" id="MF_00636"/>
    </source>
</evidence>
<accession>A0KAL8</accession>
<proteinExistence type="inferred from homology"/>
<dbReference type="EMBL" id="CP000458">
    <property type="protein sequence ID" value="ABK09545.1"/>
    <property type="molecule type" value="Genomic_DNA"/>
</dbReference>
<dbReference type="SMR" id="A0KAL8"/>
<dbReference type="KEGG" id="bch:Bcen2424_2795"/>
<dbReference type="HOGENOM" id="CLU_059558_1_1_4"/>
<dbReference type="GO" id="GO:0005524">
    <property type="term" value="F:ATP binding"/>
    <property type="evidence" value="ECO:0007669"/>
    <property type="project" value="UniProtKB-UniRule"/>
</dbReference>
<dbReference type="GO" id="GO:0005525">
    <property type="term" value="F:GTP binding"/>
    <property type="evidence" value="ECO:0007669"/>
    <property type="project" value="UniProtKB-UniRule"/>
</dbReference>
<dbReference type="Gene3D" id="3.40.50.300">
    <property type="entry name" value="P-loop containing nucleotide triphosphate hydrolases"/>
    <property type="match status" value="1"/>
</dbReference>
<dbReference type="HAMAP" id="MF_00636">
    <property type="entry name" value="RapZ_like"/>
    <property type="match status" value="1"/>
</dbReference>
<dbReference type="InterPro" id="IPR027417">
    <property type="entry name" value="P-loop_NTPase"/>
</dbReference>
<dbReference type="InterPro" id="IPR005337">
    <property type="entry name" value="RapZ-like"/>
</dbReference>
<dbReference type="InterPro" id="IPR053930">
    <property type="entry name" value="RapZ-like_N"/>
</dbReference>
<dbReference type="InterPro" id="IPR053931">
    <property type="entry name" value="RapZ_C"/>
</dbReference>
<dbReference type="NCBIfam" id="NF003828">
    <property type="entry name" value="PRK05416.1"/>
    <property type="match status" value="1"/>
</dbReference>
<dbReference type="PANTHER" id="PTHR30448">
    <property type="entry name" value="RNASE ADAPTER PROTEIN RAPZ"/>
    <property type="match status" value="1"/>
</dbReference>
<dbReference type="PANTHER" id="PTHR30448:SF0">
    <property type="entry name" value="RNASE ADAPTER PROTEIN RAPZ"/>
    <property type="match status" value="1"/>
</dbReference>
<dbReference type="Pfam" id="PF22740">
    <property type="entry name" value="PapZ_C"/>
    <property type="match status" value="1"/>
</dbReference>
<dbReference type="Pfam" id="PF03668">
    <property type="entry name" value="RapZ-like_N"/>
    <property type="match status" value="1"/>
</dbReference>
<dbReference type="PIRSF" id="PIRSF005052">
    <property type="entry name" value="P-loopkin"/>
    <property type="match status" value="1"/>
</dbReference>
<dbReference type="SUPFAM" id="SSF52540">
    <property type="entry name" value="P-loop containing nucleoside triphosphate hydrolases"/>
    <property type="match status" value="1"/>
</dbReference>
<name>Y2795_BURCH</name>